<sequence>MASQLIENKLKLLPEKAGCYLMKDVNGKVIYVGKSKNLKNRVRSYFKSSQEGRRAELVKNIADYDIIVVDSDKEAFLLEVTLIKKYQPYYNVALKSGTGYPYIEITNEKNPQTRLTSIVYKDKGYYFGPYPNVYAASATLKFIQKVFPLRRCSGYTGRPCLYYHMGQCLGSCFKEVPQSEYDEQIKKIKRFLNGDIQEVKKDLTNKMLQASADLEFERAGELRDQLKYIEETVEKQKIISNDHTQRDIFNYYVDRSWISIQVFFLRQAKLLRRESHMFPLTDETDPEDEFMSFIAQFYAQKNRVNPREVLVPKGIDQDELAAAIGIKVRTPQRGQKASLMEMARENAQLKLDDKFRLLELGQRKTKGAQEEIFKALGLPYGSYIESFDHSHIQGADPVSALVVFKDGEPFKTGYRKFKLKGEVEHQNSADEVGNTREVVRRRYSRLLKEHERMPDLILMDGGQIQVEACEDVLRNELNLDIPVAGMVKDDKHRTNHLLYGDPFKGQPFKLIPMDPKSEGFYLMTRIQDEVHRFAITFHRQTHAKNSLVSRLDSIKGIGPKSRTKLLREFGSLKKIKEASIDDLRKAGLTLTQAQAVKISL</sequence>
<accession>Q04B12</accession>
<feature type="chain" id="PRO_1000077797" description="UvrABC system protein C">
    <location>
        <begin position="1"/>
        <end position="600"/>
    </location>
</feature>
<feature type="domain" description="GIY-YIG" evidence="1">
    <location>
        <begin position="15"/>
        <end position="92"/>
    </location>
</feature>
<feature type="domain" description="UVR" evidence="1">
    <location>
        <begin position="197"/>
        <end position="232"/>
    </location>
</feature>
<name>UVRC_LACDB</name>
<reference key="1">
    <citation type="journal article" date="2006" name="Proc. Natl. Acad. Sci. U.S.A.">
        <title>Comparative genomics of the lactic acid bacteria.</title>
        <authorList>
            <person name="Makarova K.S."/>
            <person name="Slesarev A."/>
            <person name="Wolf Y.I."/>
            <person name="Sorokin A."/>
            <person name="Mirkin B."/>
            <person name="Koonin E.V."/>
            <person name="Pavlov A."/>
            <person name="Pavlova N."/>
            <person name="Karamychev V."/>
            <person name="Polouchine N."/>
            <person name="Shakhova V."/>
            <person name="Grigoriev I."/>
            <person name="Lou Y."/>
            <person name="Rohksar D."/>
            <person name="Lucas S."/>
            <person name="Huang K."/>
            <person name="Goodstein D.M."/>
            <person name="Hawkins T."/>
            <person name="Plengvidhya V."/>
            <person name="Welker D."/>
            <person name="Hughes J."/>
            <person name="Goh Y."/>
            <person name="Benson A."/>
            <person name="Baldwin K."/>
            <person name="Lee J.-H."/>
            <person name="Diaz-Muniz I."/>
            <person name="Dosti B."/>
            <person name="Smeianov V."/>
            <person name="Wechter W."/>
            <person name="Barabote R."/>
            <person name="Lorca G."/>
            <person name="Altermann E."/>
            <person name="Barrangou R."/>
            <person name="Ganesan B."/>
            <person name="Xie Y."/>
            <person name="Rawsthorne H."/>
            <person name="Tamir D."/>
            <person name="Parker C."/>
            <person name="Breidt F."/>
            <person name="Broadbent J.R."/>
            <person name="Hutkins R."/>
            <person name="O'Sullivan D."/>
            <person name="Steele J."/>
            <person name="Unlu G."/>
            <person name="Saier M.H. Jr."/>
            <person name="Klaenhammer T."/>
            <person name="Richardson P."/>
            <person name="Kozyavkin S."/>
            <person name="Weimer B.C."/>
            <person name="Mills D.A."/>
        </authorList>
    </citation>
    <scope>NUCLEOTIDE SEQUENCE [LARGE SCALE GENOMIC DNA]</scope>
    <source>
        <strain>ATCC BAA-365 / Lb-18</strain>
    </source>
</reference>
<dbReference type="EMBL" id="CP000412">
    <property type="protein sequence ID" value="ABJ58360.1"/>
    <property type="molecule type" value="Genomic_DNA"/>
</dbReference>
<dbReference type="RefSeq" id="WP_003619779.1">
    <property type="nucleotide sequence ID" value="NC_008529.1"/>
</dbReference>
<dbReference type="SMR" id="Q04B12"/>
<dbReference type="KEGG" id="lbu:LBUL_0746"/>
<dbReference type="HOGENOM" id="CLU_014841_3_2_9"/>
<dbReference type="BioCyc" id="LDEL321956:LBUL_RS03555-MONOMER"/>
<dbReference type="GO" id="GO:0005737">
    <property type="term" value="C:cytoplasm"/>
    <property type="evidence" value="ECO:0007669"/>
    <property type="project" value="UniProtKB-SubCell"/>
</dbReference>
<dbReference type="GO" id="GO:0009380">
    <property type="term" value="C:excinuclease repair complex"/>
    <property type="evidence" value="ECO:0007669"/>
    <property type="project" value="InterPro"/>
</dbReference>
<dbReference type="GO" id="GO:0003677">
    <property type="term" value="F:DNA binding"/>
    <property type="evidence" value="ECO:0007669"/>
    <property type="project" value="UniProtKB-UniRule"/>
</dbReference>
<dbReference type="GO" id="GO:0009381">
    <property type="term" value="F:excinuclease ABC activity"/>
    <property type="evidence" value="ECO:0007669"/>
    <property type="project" value="UniProtKB-UniRule"/>
</dbReference>
<dbReference type="GO" id="GO:0006289">
    <property type="term" value="P:nucleotide-excision repair"/>
    <property type="evidence" value="ECO:0007669"/>
    <property type="project" value="UniProtKB-UniRule"/>
</dbReference>
<dbReference type="GO" id="GO:0009432">
    <property type="term" value="P:SOS response"/>
    <property type="evidence" value="ECO:0007669"/>
    <property type="project" value="UniProtKB-UniRule"/>
</dbReference>
<dbReference type="CDD" id="cd10434">
    <property type="entry name" value="GIY-YIG_UvrC_Cho"/>
    <property type="match status" value="1"/>
</dbReference>
<dbReference type="FunFam" id="3.40.1440.10:FF:000001">
    <property type="entry name" value="UvrABC system protein C"/>
    <property type="match status" value="1"/>
</dbReference>
<dbReference type="Gene3D" id="1.10.150.20">
    <property type="entry name" value="5' to 3' exonuclease, C-terminal subdomain"/>
    <property type="match status" value="1"/>
</dbReference>
<dbReference type="Gene3D" id="3.40.1440.10">
    <property type="entry name" value="GIY-YIG endonuclease"/>
    <property type="match status" value="1"/>
</dbReference>
<dbReference type="Gene3D" id="4.10.860.10">
    <property type="entry name" value="UVR domain"/>
    <property type="match status" value="1"/>
</dbReference>
<dbReference type="Gene3D" id="3.30.420.340">
    <property type="entry name" value="UvrC, RNAse H endonuclease domain"/>
    <property type="match status" value="1"/>
</dbReference>
<dbReference type="HAMAP" id="MF_00203">
    <property type="entry name" value="UvrC"/>
    <property type="match status" value="1"/>
</dbReference>
<dbReference type="InterPro" id="IPR000305">
    <property type="entry name" value="GIY-YIG_endonuc"/>
</dbReference>
<dbReference type="InterPro" id="IPR035901">
    <property type="entry name" value="GIY-YIG_endonuc_sf"/>
</dbReference>
<dbReference type="InterPro" id="IPR047296">
    <property type="entry name" value="GIY-YIG_UvrC_Cho"/>
</dbReference>
<dbReference type="InterPro" id="IPR010994">
    <property type="entry name" value="RuvA_2-like"/>
</dbReference>
<dbReference type="InterPro" id="IPR001943">
    <property type="entry name" value="UVR_dom"/>
</dbReference>
<dbReference type="InterPro" id="IPR036876">
    <property type="entry name" value="UVR_dom_sf"/>
</dbReference>
<dbReference type="InterPro" id="IPR050066">
    <property type="entry name" value="UvrABC_protein_C"/>
</dbReference>
<dbReference type="InterPro" id="IPR004791">
    <property type="entry name" value="UvrC"/>
</dbReference>
<dbReference type="InterPro" id="IPR001162">
    <property type="entry name" value="UvrC_RNase_H_dom"/>
</dbReference>
<dbReference type="InterPro" id="IPR038476">
    <property type="entry name" value="UvrC_RNase_H_dom_sf"/>
</dbReference>
<dbReference type="NCBIfam" id="TIGR00194">
    <property type="entry name" value="uvrC"/>
    <property type="match status" value="1"/>
</dbReference>
<dbReference type="PANTHER" id="PTHR30562:SF1">
    <property type="entry name" value="UVRABC SYSTEM PROTEIN C"/>
    <property type="match status" value="1"/>
</dbReference>
<dbReference type="PANTHER" id="PTHR30562">
    <property type="entry name" value="UVRC/OXIDOREDUCTASE"/>
    <property type="match status" value="1"/>
</dbReference>
<dbReference type="Pfam" id="PF01541">
    <property type="entry name" value="GIY-YIG"/>
    <property type="match status" value="1"/>
</dbReference>
<dbReference type="Pfam" id="PF14520">
    <property type="entry name" value="HHH_5"/>
    <property type="match status" value="1"/>
</dbReference>
<dbReference type="Pfam" id="PF02151">
    <property type="entry name" value="UVR"/>
    <property type="match status" value="1"/>
</dbReference>
<dbReference type="Pfam" id="PF22920">
    <property type="entry name" value="UvrC_RNaseH"/>
    <property type="match status" value="1"/>
</dbReference>
<dbReference type="Pfam" id="PF08459">
    <property type="entry name" value="UvrC_RNaseH_dom"/>
    <property type="match status" value="1"/>
</dbReference>
<dbReference type="SMART" id="SM00465">
    <property type="entry name" value="GIYc"/>
    <property type="match status" value="1"/>
</dbReference>
<dbReference type="SUPFAM" id="SSF46600">
    <property type="entry name" value="C-terminal UvrC-binding domain of UvrB"/>
    <property type="match status" value="1"/>
</dbReference>
<dbReference type="SUPFAM" id="SSF82771">
    <property type="entry name" value="GIY-YIG endonuclease"/>
    <property type="match status" value="1"/>
</dbReference>
<dbReference type="SUPFAM" id="SSF47781">
    <property type="entry name" value="RuvA domain 2-like"/>
    <property type="match status" value="1"/>
</dbReference>
<dbReference type="PROSITE" id="PS50164">
    <property type="entry name" value="GIY_YIG"/>
    <property type="match status" value="1"/>
</dbReference>
<dbReference type="PROSITE" id="PS50151">
    <property type="entry name" value="UVR"/>
    <property type="match status" value="1"/>
</dbReference>
<dbReference type="PROSITE" id="PS50165">
    <property type="entry name" value="UVRC"/>
    <property type="match status" value="1"/>
</dbReference>
<protein>
    <recommendedName>
        <fullName evidence="1">UvrABC system protein C</fullName>
        <shortName evidence="1">Protein UvrC</shortName>
    </recommendedName>
    <alternativeName>
        <fullName evidence="1">Excinuclease ABC subunit C</fullName>
    </alternativeName>
</protein>
<gene>
    <name evidence="1" type="primary">uvrC</name>
    <name type="ordered locus">LBUL_0746</name>
</gene>
<keyword id="KW-0963">Cytoplasm</keyword>
<keyword id="KW-0227">DNA damage</keyword>
<keyword id="KW-0228">DNA excision</keyword>
<keyword id="KW-0234">DNA repair</keyword>
<keyword id="KW-0267">Excision nuclease</keyword>
<keyword id="KW-0742">SOS response</keyword>
<comment type="function">
    <text evidence="1">The UvrABC repair system catalyzes the recognition and processing of DNA lesions. UvrC both incises the 5' and 3' sides of the lesion. The N-terminal half is responsible for the 3' incision and the C-terminal half is responsible for the 5' incision.</text>
</comment>
<comment type="subunit">
    <text evidence="1">Interacts with UvrB in an incision complex.</text>
</comment>
<comment type="subcellular location">
    <subcellularLocation>
        <location evidence="1">Cytoplasm</location>
    </subcellularLocation>
</comment>
<comment type="similarity">
    <text evidence="1">Belongs to the UvrC family.</text>
</comment>
<evidence type="ECO:0000255" key="1">
    <source>
        <dbReference type="HAMAP-Rule" id="MF_00203"/>
    </source>
</evidence>
<proteinExistence type="inferred from homology"/>
<organism>
    <name type="scientific">Lactobacillus delbrueckii subsp. bulgaricus (strain ATCC BAA-365 / Lb-18)</name>
    <dbReference type="NCBI Taxonomy" id="321956"/>
    <lineage>
        <taxon>Bacteria</taxon>
        <taxon>Bacillati</taxon>
        <taxon>Bacillota</taxon>
        <taxon>Bacilli</taxon>
        <taxon>Lactobacillales</taxon>
        <taxon>Lactobacillaceae</taxon>
        <taxon>Lactobacillus</taxon>
    </lineage>
</organism>